<accession>C1DQ65</accession>
<name>MURA_AZOVD</name>
<feature type="chain" id="PRO_1000202923" description="UDP-N-acetylglucosamine 1-carboxyvinyltransferase">
    <location>
        <begin position="1"/>
        <end position="421"/>
    </location>
</feature>
<feature type="active site" description="Proton donor" evidence="1">
    <location>
        <position position="117"/>
    </location>
</feature>
<feature type="binding site" evidence="1">
    <location>
        <begin position="22"/>
        <end position="23"/>
    </location>
    <ligand>
        <name>phosphoenolpyruvate</name>
        <dbReference type="ChEBI" id="CHEBI:58702"/>
    </ligand>
</feature>
<feature type="binding site" evidence="1">
    <location>
        <position position="93"/>
    </location>
    <ligand>
        <name>UDP-N-acetyl-alpha-D-glucosamine</name>
        <dbReference type="ChEBI" id="CHEBI:57705"/>
    </ligand>
</feature>
<feature type="binding site" evidence="1">
    <location>
        <begin position="122"/>
        <end position="126"/>
    </location>
    <ligand>
        <name>UDP-N-acetyl-alpha-D-glucosamine</name>
        <dbReference type="ChEBI" id="CHEBI:57705"/>
    </ligand>
</feature>
<feature type="binding site" evidence="1">
    <location>
        <position position="308"/>
    </location>
    <ligand>
        <name>UDP-N-acetyl-alpha-D-glucosamine</name>
        <dbReference type="ChEBI" id="CHEBI:57705"/>
    </ligand>
</feature>
<feature type="binding site" evidence="1">
    <location>
        <position position="330"/>
    </location>
    <ligand>
        <name>UDP-N-acetyl-alpha-D-glucosamine</name>
        <dbReference type="ChEBI" id="CHEBI:57705"/>
    </ligand>
</feature>
<feature type="modified residue" description="2-(S-cysteinyl)pyruvic acid O-phosphothioketal" evidence="1">
    <location>
        <position position="117"/>
    </location>
</feature>
<proteinExistence type="inferred from homology"/>
<sequence length="421" mass="44854">MDKLIITGGHRLDGEIRISGAKNAALPILAATLLADTPVTVCNLPHLHDITTMIELFGRMGVQPVIDEKLSVEMDASSIKTLVAPYELVKTMRASILVLGPMLARFGEAEVALPGGCAIGSRPVDLHIRGLEALGAQIEMDGGYIKARAPAGGLRGGHFFFDIVSVTGTENIMMAAALASGRTVLENAAREPEVVDLANFLIGMGAQIKGAGTDTVVIEGVKRLGGGRYSVMPDRIETGTYLVAAVATRGRVKLKDTDPTILEAVLLKLEEAGAQIDTGNNWISLDMKGNRPKAVNVRTAPYPAFPTDMQAQFISMNAVAEGTGTVIETVFENRFMHVYEMNRMGARILVEGNTAIVTGVPCLKGAPVMATDLRASASLVIAGLVAEGDTLIDRIYHIDRGYECIEEKLQLLGAKIRRIPG</sequence>
<comment type="function">
    <text evidence="1">Cell wall formation. Adds enolpyruvyl to UDP-N-acetylglucosamine.</text>
</comment>
<comment type="catalytic activity">
    <reaction evidence="1">
        <text>phosphoenolpyruvate + UDP-N-acetyl-alpha-D-glucosamine = UDP-N-acetyl-3-O-(1-carboxyvinyl)-alpha-D-glucosamine + phosphate</text>
        <dbReference type="Rhea" id="RHEA:18681"/>
        <dbReference type="ChEBI" id="CHEBI:43474"/>
        <dbReference type="ChEBI" id="CHEBI:57705"/>
        <dbReference type="ChEBI" id="CHEBI:58702"/>
        <dbReference type="ChEBI" id="CHEBI:68483"/>
        <dbReference type="EC" id="2.5.1.7"/>
    </reaction>
</comment>
<comment type="pathway">
    <text evidence="1">Cell wall biogenesis; peptidoglycan biosynthesis.</text>
</comment>
<comment type="subcellular location">
    <subcellularLocation>
        <location evidence="1">Cytoplasm</location>
    </subcellularLocation>
</comment>
<comment type="similarity">
    <text evidence="1">Belongs to the EPSP synthase family. MurA subfamily.</text>
</comment>
<organism>
    <name type="scientific">Azotobacter vinelandii (strain DJ / ATCC BAA-1303)</name>
    <dbReference type="NCBI Taxonomy" id="322710"/>
    <lineage>
        <taxon>Bacteria</taxon>
        <taxon>Pseudomonadati</taxon>
        <taxon>Pseudomonadota</taxon>
        <taxon>Gammaproteobacteria</taxon>
        <taxon>Pseudomonadales</taxon>
        <taxon>Pseudomonadaceae</taxon>
        <taxon>Azotobacter</taxon>
    </lineage>
</organism>
<protein>
    <recommendedName>
        <fullName evidence="1">UDP-N-acetylglucosamine 1-carboxyvinyltransferase</fullName>
        <ecNumber evidence="1">2.5.1.7</ecNumber>
    </recommendedName>
    <alternativeName>
        <fullName evidence="1">Enoylpyruvate transferase</fullName>
    </alternativeName>
    <alternativeName>
        <fullName evidence="1">UDP-N-acetylglucosamine enolpyruvyl transferase</fullName>
        <shortName evidence="1">EPT</shortName>
    </alternativeName>
</protein>
<keyword id="KW-0131">Cell cycle</keyword>
<keyword id="KW-0132">Cell division</keyword>
<keyword id="KW-0133">Cell shape</keyword>
<keyword id="KW-0961">Cell wall biogenesis/degradation</keyword>
<keyword id="KW-0963">Cytoplasm</keyword>
<keyword id="KW-0573">Peptidoglycan synthesis</keyword>
<keyword id="KW-0670">Pyruvate</keyword>
<keyword id="KW-0808">Transferase</keyword>
<reference key="1">
    <citation type="journal article" date="2009" name="J. Bacteriol.">
        <title>Genome sequence of Azotobacter vinelandii, an obligate aerobe specialized to support diverse anaerobic metabolic processes.</title>
        <authorList>
            <person name="Setubal J.C."/>
            <person name="Dos Santos P."/>
            <person name="Goldman B.S."/>
            <person name="Ertesvaag H."/>
            <person name="Espin G."/>
            <person name="Rubio L.M."/>
            <person name="Valla S."/>
            <person name="Almeida N.F."/>
            <person name="Balasubramanian D."/>
            <person name="Cromes L."/>
            <person name="Curatti L."/>
            <person name="Du Z."/>
            <person name="Godsy E."/>
            <person name="Goodner B."/>
            <person name="Hellner-Burris K."/>
            <person name="Hernandez J.A."/>
            <person name="Houmiel K."/>
            <person name="Imperial J."/>
            <person name="Kennedy C."/>
            <person name="Larson T.J."/>
            <person name="Latreille P."/>
            <person name="Ligon L.S."/>
            <person name="Lu J."/>
            <person name="Maerk M."/>
            <person name="Miller N.M."/>
            <person name="Norton S."/>
            <person name="O'Carroll I.P."/>
            <person name="Paulsen I."/>
            <person name="Raulfs E.C."/>
            <person name="Roemer R."/>
            <person name="Rosser J."/>
            <person name="Segura D."/>
            <person name="Slater S."/>
            <person name="Stricklin S.L."/>
            <person name="Studholme D.J."/>
            <person name="Sun J."/>
            <person name="Viana C.J."/>
            <person name="Wallin E."/>
            <person name="Wang B."/>
            <person name="Wheeler C."/>
            <person name="Zhu H."/>
            <person name="Dean D.R."/>
            <person name="Dixon R."/>
            <person name="Wood D."/>
        </authorList>
    </citation>
    <scope>NUCLEOTIDE SEQUENCE [LARGE SCALE GENOMIC DNA]</scope>
    <source>
        <strain>DJ / ATCC BAA-1303</strain>
    </source>
</reference>
<dbReference type="EC" id="2.5.1.7" evidence="1"/>
<dbReference type="EMBL" id="CP001157">
    <property type="protein sequence ID" value="ACO77517.1"/>
    <property type="molecule type" value="Genomic_DNA"/>
</dbReference>
<dbReference type="RefSeq" id="WP_012699937.1">
    <property type="nucleotide sequence ID" value="NC_012560.1"/>
</dbReference>
<dbReference type="SMR" id="C1DQ65"/>
<dbReference type="STRING" id="322710.Avin_12910"/>
<dbReference type="EnsemblBacteria" id="ACO77517">
    <property type="protein sequence ID" value="ACO77517"/>
    <property type="gene ID" value="Avin_12910"/>
</dbReference>
<dbReference type="GeneID" id="88184607"/>
<dbReference type="KEGG" id="avn:Avin_12910"/>
<dbReference type="eggNOG" id="COG0766">
    <property type="taxonomic scope" value="Bacteria"/>
</dbReference>
<dbReference type="HOGENOM" id="CLU_027387_0_0_6"/>
<dbReference type="OrthoDB" id="9803760at2"/>
<dbReference type="UniPathway" id="UPA00219"/>
<dbReference type="Proteomes" id="UP000002424">
    <property type="component" value="Chromosome"/>
</dbReference>
<dbReference type="GO" id="GO:0005737">
    <property type="term" value="C:cytoplasm"/>
    <property type="evidence" value="ECO:0007669"/>
    <property type="project" value="UniProtKB-SubCell"/>
</dbReference>
<dbReference type="GO" id="GO:0008760">
    <property type="term" value="F:UDP-N-acetylglucosamine 1-carboxyvinyltransferase activity"/>
    <property type="evidence" value="ECO:0007669"/>
    <property type="project" value="UniProtKB-UniRule"/>
</dbReference>
<dbReference type="GO" id="GO:0051301">
    <property type="term" value="P:cell division"/>
    <property type="evidence" value="ECO:0007669"/>
    <property type="project" value="UniProtKB-KW"/>
</dbReference>
<dbReference type="GO" id="GO:0071555">
    <property type="term" value="P:cell wall organization"/>
    <property type="evidence" value="ECO:0007669"/>
    <property type="project" value="UniProtKB-KW"/>
</dbReference>
<dbReference type="GO" id="GO:0009252">
    <property type="term" value="P:peptidoglycan biosynthetic process"/>
    <property type="evidence" value="ECO:0007669"/>
    <property type="project" value="UniProtKB-UniRule"/>
</dbReference>
<dbReference type="GO" id="GO:0008360">
    <property type="term" value="P:regulation of cell shape"/>
    <property type="evidence" value="ECO:0007669"/>
    <property type="project" value="UniProtKB-KW"/>
</dbReference>
<dbReference type="GO" id="GO:0019277">
    <property type="term" value="P:UDP-N-acetylgalactosamine biosynthetic process"/>
    <property type="evidence" value="ECO:0007669"/>
    <property type="project" value="InterPro"/>
</dbReference>
<dbReference type="CDD" id="cd01555">
    <property type="entry name" value="UdpNAET"/>
    <property type="match status" value="1"/>
</dbReference>
<dbReference type="FunFam" id="3.65.10.10:FF:000002">
    <property type="entry name" value="UDP-N-acetylglucosamine 1-carboxyvinyltransferase"/>
    <property type="match status" value="1"/>
</dbReference>
<dbReference type="Gene3D" id="3.65.10.10">
    <property type="entry name" value="Enolpyruvate transferase domain"/>
    <property type="match status" value="2"/>
</dbReference>
<dbReference type="HAMAP" id="MF_00111">
    <property type="entry name" value="MurA"/>
    <property type="match status" value="1"/>
</dbReference>
<dbReference type="InterPro" id="IPR001986">
    <property type="entry name" value="Enolpyruvate_Tfrase_dom"/>
</dbReference>
<dbReference type="InterPro" id="IPR036968">
    <property type="entry name" value="Enolpyruvate_Tfrase_sf"/>
</dbReference>
<dbReference type="InterPro" id="IPR050068">
    <property type="entry name" value="MurA_subfamily"/>
</dbReference>
<dbReference type="InterPro" id="IPR013792">
    <property type="entry name" value="RNA3'P_cycl/enolpyr_Trfase_a/b"/>
</dbReference>
<dbReference type="InterPro" id="IPR005750">
    <property type="entry name" value="UDP_GlcNAc_COvinyl_MurA"/>
</dbReference>
<dbReference type="NCBIfam" id="TIGR01072">
    <property type="entry name" value="murA"/>
    <property type="match status" value="1"/>
</dbReference>
<dbReference type="NCBIfam" id="NF006873">
    <property type="entry name" value="PRK09369.1"/>
    <property type="match status" value="1"/>
</dbReference>
<dbReference type="PANTHER" id="PTHR43783">
    <property type="entry name" value="UDP-N-ACETYLGLUCOSAMINE 1-CARBOXYVINYLTRANSFERASE"/>
    <property type="match status" value="1"/>
</dbReference>
<dbReference type="PANTHER" id="PTHR43783:SF1">
    <property type="entry name" value="UDP-N-ACETYLGLUCOSAMINE 1-CARBOXYVINYLTRANSFERASE"/>
    <property type="match status" value="1"/>
</dbReference>
<dbReference type="Pfam" id="PF00275">
    <property type="entry name" value="EPSP_synthase"/>
    <property type="match status" value="1"/>
</dbReference>
<dbReference type="SUPFAM" id="SSF55205">
    <property type="entry name" value="EPT/RTPC-like"/>
    <property type="match status" value="1"/>
</dbReference>
<evidence type="ECO:0000255" key="1">
    <source>
        <dbReference type="HAMAP-Rule" id="MF_00111"/>
    </source>
</evidence>
<gene>
    <name evidence="1" type="primary">murA</name>
    <name type="ordered locus">Avin_12910</name>
</gene>